<name>HIS1_YERPN</name>
<accession>Q1CGX2</accession>
<accession>C4GVB2</accession>
<evidence type="ECO:0000255" key="1">
    <source>
        <dbReference type="HAMAP-Rule" id="MF_00079"/>
    </source>
</evidence>
<dbReference type="EC" id="2.4.2.17" evidence="1"/>
<dbReference type="EMBL" id="CP000305">
    <property type="protein sequence ID" value="ABG18758.1"/>
    <property type="molecule type" value="Genomic_DNA"/>
</dbReference>
<dbReference type="EMBL" id="ACNQ01000014">
    <property type="protein sequence ID" value="EEO75996.1"/>
    <property type="molecule type" value="Genomic_DNA"/>
</dbReference>
<dbReference type="RefSeq" id="WP_002211896.1">
    <property type="nucleotide sequence ID" value="NZ_ACNQ01000014.1"/>
</dbReference>
<dbReference type="SMR" id="Q1CGX2"/>
<dbReference type="GeneID" id="96665168"/>
<dbReference type="KEGG" id="ypn:YPN_2430"/>
<dbReference type="HOGENOM" id="CLU_038115_1_0_6"/>
<dbReference type="UniPathway" id="UPA00031">
    <property type="reaction ID" value="UER00006"/>
</dbReference>
<dbReference type="Proteomes" id="UP000008936">
    <property type="component" value="Chromosome"/>
</dbReference>
<dbReference type="GO" id="GO:0005737">
    <property type="term" value="C:cytoplasm"/>
    <property type="evidence" value="ECO:0007669"/>
    <property type="project" value="UniProtKB-SubCell"/>
</dbReference>
<dbReference type="GO" id="GO:0005524">
    <property type="term" value="F:ATP binding"/>
    <property type="evidence" value="ECO:0007669"/>
    <property type="project" value="UniProtKB-KW"/>
</dbReference>
<dbReference type="GO" id="GO:0003879">
    <property type="term" value="F:ATP phosphoribosyltransferase activity"/>
    <property type="evidence" value="ECO:0007669"/>
    <property type="project" value="UniProtKB-UniRule"/>
</dbReference>
<dbReference type="GO" id="GO:0000287">
    <property type="term" value="F:magnesium ion binding"/>
    <property type="evidence" value="ECO:0007669"/>
    <property type="project" value="UniProtKB-UniRule"/>
</dbReference>
<dbReference type="GO" id="GO:0000105">
    <property type="term" value="P:L-histidine biosynthetic process"/>
    <property type="evidence" value="ECO:0007669"/>
    <property type="project" value="UniProtKB-UniRule"/>
</dbReference>
<dbReference type="CDD" id="cd13592">
    <property type="entry name" value="PBP2_HisGL2"/>
    <property type="match status" value="1"/>
</dbReference>
<dbReference type="FunFam" id="3.30.70.120:FF:000002">
    <property type="entry name" value="ATP phosphoribosyltransferase"/>
    <property type="match status" value="1"/>
</dbReference>
<dbReference type="FunFam" id="3.40.190.10:FF:000008">
    <property type="entry name" value="ATP phosphoribosyltransferase"/>
    <property type="match status" value="1"/>
</dbReference>
<dbReference type="Gene3D" id="3.30.70.120">
    <property type="match status" value="1"/>
</dbReference>
<dbReference type="Gene3D" id="3.40.190.10">
    <property type="entry name" value="Periplasmic binding protein-like II"/>
    <property type="match status" value="2"/>
</dbReference>
<dbReference type="HAMAP" id="MF_00079">
    <property type="entry name" value="HisG_Long"/>
    <property type="match status" value="1"/>
</dbReference>
<dbReference type="InterPro" id="IPR020621">
    <property type="entry name" value="ATP-PRT_HisG_long"/>
</dbReference>
<dbReference type="InterPro" id="IPR013820">
    <property type="entry name" value="ATP_PRibTrfase_cat"/>
</dbReference>
<dbReference type="InterPro" id="IPR018198">
    <property type="entry name" value="ATP_PRibTrfase_CS"/>
</dbReference>
<dbReference type="InterPro" id="IPR001348">
    <property type="entry name" value="ATP_PRibTrfase_HisG"/>
</dbReference>
<dbReference type="InterPro" id="IPR013115">
    <property type="entry name" value="HisG_C"/>
</dbReference>
<dbReference type="InterPro" id="IPR011322">
    <property type="entry name" value="N-reg_PII-like_a/b"/>
</dbReference>
<dbReference type="InterPro" id="IPR015867">
    <property type="entry name" value="N-reg_PII/ATP_PRibTrfase_C"/>
</dbReference>
<dbReference type="NCBIfam" id="TIGR00070">
    <property type="entry name" value="hisG"/>
    <property type="match status" value="1"/>
</dbReference>
<dbReference type="NCBIfam" id="TIGR03455">
    <property type="entry name" value="HisG_C-term"/>
    <property type="match status" value="1"/>
</dbReference>
<dbReference type="PANTHER" id="PTHR21403:SF8">
    <property type="entry name" value="ATP PHOSPHORIBOSYLTRANSFERASE"/>
    <property type="match status" value="1"/>
</dbReference>
<dbReference type="PANTHER" id="PTHR21403">
    <property type="entry name" value="ATP PHOSPHORIBOSYLTRANSFERASE ATP-PRTASE"/>
    <property type="match status" value="1"/>
</dbReference>
<dbReference type="Pfam" id="PF01634">
    <property type="entry name" value="HisG"/>
    <property type="match status" value="1"/>
</dbReference>
<dbReference type="Pfam" id="PF08029">
    <property type="entry name" value="HisG_C"/>
    <property type="match status" value="1"/>
</dbReference>
<dbReference type="SUPFAM" id="SSF54913">
    <property type="entry name" value="GlnB-like"/>
    <property type="match status" value="1"/>
</dbReference>
<dbReference type="SUPFAM" id="SSF53850">
    <property type="entry name" value="Periplasmic binding protein-like II"/>
    <property type="match status" value="1"/>
</dbReference>
<dbReference type="PROSITE" id="PS01316">
    <property type="entry name" value="ATP_P_PHORIBOSYLTR"/>
    <property type="match status" value="1"/>
</dbReference>
<organism>
    <name type="scientific">Yersinia pestis bv. Antiqua (strain Nepal516)</name>
    <dbReference type="NCBI Taxonomy" id="377628"/>
    <lineage>
        <taxon>Bacteria</taxon>
        <taxon>Pseudomonadati</taxon>
        <taxon>Pseudomonadota</taxon>
        <taxon>Gammaproteobacteria</taxon>
        <taxon>Enterobacterales</taxon>
        <taxon>Yersiniaceae</taxon>
        <taxon>Yersinia</taxon>
    </lineage>
</organism>
<reference key="1">
    <citation type="journal article" date="2006" name="J. Bacteriol.">
        <title>Complete genome sequence of Yersinia pestis strains Antiqua and Nepal516: evidence of gene reduction in an emerging pathogen.</title>
        <authorList>
            <person name="Chain P.S.G."/>
            <person name="Hu P."/>
            <person name="Malfatti S.A."/>
            <person name="Radnedge L."/>
            <person name="Larimer F."/>
            <person name="Vergez L.M."/>
            <person name="Worsham P."/>
            <person name="Chu M.C."/>
            <person name="Andersen G.L."/>
        </authorList>
    </citation>
    <scope>NUCLEOTIDE SEQUENCE [LARGE SCALE GENOMIC DNA]</scope>
    <source>
        <strain>Nepal516</strain>
    </source>
</reference>
<reference key="2">
    <citation type="submission" date="2009-04" db="EMBL/GenBank/DDBJ databases">
        <title>Yersinia pestis Nepal516A whole genome shotgun sequencing project.</title>
        <authorList>
            <person name="Plunkett G. III"/>
            <person name="Anderson B.D."/>
            <person name="Baumler D.J."/>
            <person name="Burland V."/>
            <person name="Cabot E.L."/>
            <person name="Glasner J.D."/>
            <person name="Mau B."/>
            <person name="Neeno-Eckwall E."/>
            <person name="Perna N.T."/>
            <person name="Munk A.C."/>
            <person name="Tapia R."/>
            <person name="Green L.D."/>
            <person name="Rogers Y.C."/>
            <person name="Detter J.C."/>
            <person name="Bruce D.C."/>
            <person name="Brettin T.S."/>
        </authorList>
    </citation>
    <scope>NUCLEOTIDE SEQUENCE [LARGE SCALE GENOMIC DNA]</scope>
    <source>
        <strain>Nepal516</strain>
    </source>
</reference>
<keyword id="KW-0028">Amino-acid biosynthesis</keyword>
<keyword id="KW-0067">ATP-binding</keyword>
<keyword id="KW-0963">Cytoplasm</keyword>
<keyword id="KW-0328">Glycosyltransferase</keyword>
<keyword id="KW-0368">Histidine biosynthesis</keyword>
<keyword id="KW-0460">Magnesium</keyword>
<keyword id="KW-0479">Metal-binding</keyword>
<keyword id="KW-0547">Nucleotide-binding</keyword>
<keyword id="KW-0808">Transferase</keyword>
<feature type="chain" id="PRO_1000004520" description="ATP phosphoribosyltransferase">
    <location>
        <begin position="1"/>
        <end position="299"/>
    </location>
</feature>
<sequence length="299" mass="33456">MLDKTRLRIAMQKSGRLSDESQELLSRCGIKINLQQQRLIAFAENMPIDILRVRDDDIPGLVMDGVVDLGIIGENVLEEELLNRRAQGDDPRYFTLRRLDFGGCRLSLAAPLDAEYTGPQCLQDTRIATSYPHILKQYLDKQGVRFKSCLLNGSVEVAPRAGLADAICDLVSTGATLEANGLREVEVIYRSKACLIQRDGEMSVDKQQLIDRLMTRIQGVIQARESKYIMMHAPSERLDEIITLLPGAERPTILPLAGDKSRVAMHMVSSETLFWETMEKLKALGASSILVLPIEKMME</sequence>
<gene>
    <name evidence="1" type="primary">hisG</name>
    <name type="ordered locus">YPN_2430</name>
    <name type="ORF">YP516_2741</name>
</gene>
<proteinExistence type="inferred from homology"/>
<protein>
    <recommendedName>
        <fullName evidence="1">ATP phosphoribosyltransferase</fullName>
        <shortName evidence="1">ATP-PRT</shortName>
        <shortName evidence="1">ATP-PRTase</shortName>
        <ecNumber evidence="1">2.4.2.17</ecNumber>
    </recommendedName>
</protein>
<comment type="function">
    <text evidence="1">Catalyzes the condensation of ATP and 5-phosphoribose 1-diphosphate to form N'-(5'-phosphoribosyl)-ATP (PR-ATP). Has a crucial role in the pathway because the rate of histidine biosynthesis seems to be controlled primarily by regulation of HisG enzymatic activity.</text>
</comment>
<comment type="catalytic activity">
    <reaction evidence="1">
        <text>1-(5-phospho-beta-D-ribosyl)-ATP + diphosphate = 5-phospho-alpha-D-ribose 1-diphosphate + ATP</text>
        <dbReference type="Rhea" id="RHEA:18473"/>
        <dbReference type="ChEBI" id="CHEBI:30616"/>
        <dbReference type="ChEBI" id="CHEBI:33019"/>
        <dbReference type="ChEBI" id="CHEBI:58017"/>
        <dbReference type="ChEBI" id="CHEBI:73183"/>
        <dbReference type="EC" id="2.4.2.17"/>
    </reaction>
</comment>
<comment type="cofactor">
    <cofactor evidence="1">
        <name>Mg(2+)</name>
        <dbReference type="ChEBI" id="CHEBI:18420"/>
    </cofactor>
</comment>
<comment type="activity regulation">
    <text evidence="1">Feedback inhibited by histidine.</text>
</comment>
<comment type="pathway">
    <text evidence="1">Amino-acid biosynthesis; L-histidine biosynthesis; L-histidine from 5-phospho-alpha-D-ribose 1-diphosphate: step 1/9.</text>
</comment>
<comment type="subunit">
    <text evidence="1">Equilibrium between an active dimeric form, an inactive hexameric form and higher aggregates. Interconversion between the various forms is largely reversible and is influenced by the natural substrates and inhibitors of the enzyme.</text>
</comment>
<comment type="subcellular location">
    <subcellularLocation>
        <location evidence="1">Cytoplasm</location>
    </subcellularLocation>
</comment>
<comment type="similarity">
    <text evidence="1">Belongs to the ATP phosphoribosyltransferase family. Long subfamily.</text>
</comment>